<dbReference type="EC" id="2.7.11.1" evidence="12 17"/>
<dbReference type="EMBL" id="AF255050">
    <property type="protein sequence ID" value="AAF70289.1"/>
    <property type="status" value="ALT_FRAME"/>
    <property type="molecule type" value="mRNA"/>
</dbReference>
<dbReference type="EMBL" id="AF100784">
    <property type="protein sequence ID" value="AAP97223.1"/>
    <property type="molecule type" value="mRNA"/>
</dbReference>
<dbReference type="EMBL" id="AF181071">
    <property type="protein sequence ID" value="AAF18391.1"/>
    <property type="molecule type" value="mRNA"/>
</dbReference>
<dbReference type="EMBL" id="AB037790">
    <property type="protein sequence ID" value="BAA92607.1"/>
    <property type="status" value="ALT_INIT"/>
    <property type="molecule type" value="mRNA"/>
</dbReference>
<dbReference type="EMBL" id="AF183414">
    <property type="protein sequence ID" value="AAG09683.1"/>
    <property type="molecule type" value="mRNA"/>
</dbReference>
<dbReference type="EMBL" id="AL136563">
    <property type="protein sequence ID" value="CAB66498.1"/>
    <property type="molecule type" value="mRNA"/>
</dbReference>
<dbReference type="EMBL" id="AF147094">
    <property type="protein sequence ID" value="AAF66736.1"/>
    <property type="molecule type" value="mRNA"/>
</dbReference>
<dbReference type="EMBL" id="AK075192">
    <property type="protein sequence ID" value="BAC11461.1"/>
    <property type="molecule type" value="mRNA"/>
</dbReference>
<dbReference type="EMBL" id="AK290327">
    <property type="protein sequence ID" value="BAF83016.1"/>
    <property type="molecule type" value="mRNA"/>
</dbReference>
<dbReference type="EMBL" id="AL834494">
    <property type="protein sequence ID" value="CAD39152.1"/>
    <property type="molecule type" value="mRNA"/>
</dbReference>
<dbReference type="EMBL" id="CH236963">
    <property type="protein sequence ID" value="EAL23714.1"/>
    <property type="molecule type" value="Genomic_DNA"/>
</dbReference>
<dbReference type="EMBL" id="CH878731">
    <property type="protein sequence ID" value="EAW55049.1"/>
    <property type="molecule type" value="Genomic_DNA"/>
</dbReference>
<dbReference type="EMBL" id="BC006524">
    <property type="protein sequence ID" value="AAH06524.1"/>
    <property type="molecule type" value="mRNA"/>
</dbReference>
<dbReference type="EMBL" id="AF116634">
    <property type="protein sequence ID" value="AAF71057.1"/>
    <property type="status" value="ALT_INIT"/>
    <property type="molecule type" value="mRNA"/>
</dbReference>
<dbReference type="CCDS" id="CCDS5345.1">
    <molecule id="Q9BQI3-1"/>
</dbReference>
<dbReference type="RefSeq" id="NP_001127807.1">
    <molecule id="Q9BQI3-2"/>
    <property type="nucleotide sequence ID" value="NM_001134335.2"/>
</dbReference>
<dbReference type="RefSeq" id="NP_055228.2">
    <molecule id="Q9BQI3-1"/>
    <property type="nucleotide sequence ID" value="NM_014413.3"/>
</dbReference>
<dbReference type="SMR" id="Q9BQI3"/>
<dbReference type="BioGRID" id="118002">
    <property type="interactions" value="31"/>
</dbReference>
<dbReference type="FunCoup" id="Q9BQI3">
    <property type="interactions" value="1893"/>
</dbReference>
<dbReference type="IntAct" id="Q9BQI3">
    <property type="interactions" value="19"/>
</dbReference>
<dbReference type="STRING" id="9606.ENSP00000199389"/>
<dbReference type="BindingDB" id="Q9BQI3"/>
<dbReference type="ChEMBL" id="CHEMBL6029"/>
<dbReference type="DrugBank" id="DB12010">
    <property type="generic name" value="Fostamatinib"/>
</dbReference>
<dbReference type="DrugCentral" id="Q9BQI3"/>
<dbReference type="GuidetoPHARMACOLOGY" id="2015"/>
<dbReference type="iPTMnet" id="Q9BQI3"/>
<dbReference type="PhosphoSitePlus" id="Q9BQI3"/>
<dbReference type="BioMuta" id="EIF2AK1"/>
<dbReference type="DMDM" id="32172458"/>
<dbReference type="CPTAC" id="CPTAC-3035"/>
<dbReference type="jPOST" id="Q9BQI3"/>
<dbReference type="MassIVE" id="Q9BQI3"/>
<dbReference type="PaxDb" id="9606-ENSP00000199389"/>
<dbReference type="PeptideAtlas" id="Q9BQI3"/>
<dbReference type="ProteomicsDB" id="78682">
    <molecule id="Q9BQI3-1"/>
</dbReference>
<dbReference type="ProteomicsDB" id="78683">
    <molecule id="Q9BQI3-2"/>
</dbReference>
<dbReference type="Pumba" id="Q9BQI3"/>
<dbReference type="Antibodypedia" id="11579">
    <property type="antibodies" value="314 antibodies from 30 providers"/>
</dbReference>
<dbReference type="DNASU" id="27102"/>
<dbReference type="Ensembl" id="ENST00000199389.11">
    <molecule id="Q9BQI3-1"/>
    <property type="protein sequence ID" value="ENSP00000199389.6"/>
    <property type="gene ID" value="ENSG00000086232.13"/>
</dbReference>
<dbReference type="GeneID" id="27102"/>
<dbReference type="KEGG" id="hsa:27102"/>
<dbReference type="MANE-Select" id="ENST00000199389.11">
    <property type="protein sequence ID" value="ENSP00000199389.6"/>
    <property type="RefSeq nucleotide sequence ID" value="NM_014413.4"/>
    <property type="RefSeq protein sequence ID" value="NP_055228.2"/>
</dbReference>
<dbReference type="UCSC" id="uc003spp.4">
    <molecule id="Q9BQI3-1"/>
    <property type="organism name" value="human"/>
</dbReference>
<dbReference type="AGR" id="HGNC:24921"/>
<dbReference type="CTD" id="27102"/>
<dbReference type="DisGeNET" id="27102"/>
<dbReference type="GeneCards" id="EIF2AK1"/>
<dbReference type="HGNC" id="HGNC:24921">
    <property type="gene designation" value="EIF2AK1"/>
</dbReference>
<dbReference type="HPA" id="ENSG00000086232">
    <property type="expression patterns" value="Low tissue specificity"/>
</dbReference>
<dbReference type="MalaCards" id="EIF2AK1"/>
<dbReference type="MIM" id="613635">
    <property type="type" value="gene"/>
</dbReference>
<dbReference type="MIM" id="618878">
    <property type="type" value="phenotype"/>
</dbReference>
<dbReference type="neXtProt" id="NX_Q9BQI3"/>
<dbReference type="OpenTargets" id="ENSG00000086232"/>
<dbReference type="PharmGKB" id="PA134919097"/>
<dbReference type="VEuPathDB" id="HostDB:ENSG00000086232"/>
<dbReference type="eggNOG" id="KOG1035">
    <property type="taxonomic scope" value="Eukaryota"/>
</dbReference>
<dbReference type="GeneTree" id="ENSGT00940000157605"/>
<dbReference type="HOGENOM" id="CLU_000288_134_1_1"/>
<dbReference type="InParanoid" id="Q9BQI3"/>
<dbReference type="OMA" id="WDWIADR"/>
<dbReference type="OrthoDB" id="1405469at2759"/>
<dbReference type="PAN-GO" id="Q9BQI3">
    <property type="GO annotations" value="1 GO annotation based on evolutionary models"/>
</dbReference>
<dbReference type="PhylomeDB" id="Q9BQI3"/>
<dbReference type="TreeFam" id="TF329383"/>
<dbReference type="PathwayCommons" id="Q9BQI3"/>
<dbReference type="Reactome" id="R-HSA-9648895">
    <property type="pathway name" value="Response of EIF2AK1 (HRI) to heme deficiency"/>
</dbReference>
<dbReference type="Reactome" id="R-HSA-9840373">
    <property type="pathway name" value="Cellular response to mitochondrial stress"/>
</dbReference>
<dbReference type="SignaLink" id="Q9BQI3"/>
<dbReference type="SIGNOR" id="Q9BQI3"/>
<dbReference type="BioGRID-ORCS" id="27102">
    <property type="hits" value="21 hits in 1192 CRISPR screens"/>
</dbReference>
<dbReference type="CD-CODE" id="DEE660B4">
    <property type="entry name" value="Stress granule"/>
</dbReference>
<dbReference type="ChiTaRS" id="EIF2AK1">
    <property type="organism name" value="human"/>
</dbReference>
<dbReference type="GeneWiki" id="EIF2AK1"/>
<dbReference type="GenomeRNAi" id="27102"/>
<dbReference type="Pharos" id="Q9BQI3">
    <property type="development level" value="Tchem"/>
</dbReference>
<dbReference type="PRO" id="PR:Q9BQI3"/>
<dbReference type="Proteomes" id="UP000005640">
    <property type="component" value="Chromosome 7"/>
</dbReference>
<dbReference type="RNAct" id="Q9BQI3">
    <property type="molecule type" value="protein"/>
</dbReference>
<dbReference type="Bgee" id="ENSG00000086232">
    <property type="expression patterns" value="Expressed in trabecular bone tissue and 200 other cell types or tissues"/>
</dbReference>
<dbReference type="ExpressionAtlas" id="Q9BQI3">
    <property type="expression patterns" value="baseline and differential"/>
</dbReference>
<dbReference type="GO" id="GO:0005737">
    <property type="term" value="C:cytoplasm"/>
    <property type="evidence" value="ECO:0000318"/>
    <property type="project" value="GO_Central"/>
</dbReference>
<dbReference type="GO" id="GO:0005829">
    <property type="term" value="C:cytosol"/>
    <property type="evidence" value="ECO:0000314"/>
    <property type="project" value="UniProt"/>
</dbReference>
<dbReference type="GO" id="GO:0005634">
    <property type="term" value="C:nucleus"/>
    <property type="evidence" value="ECO:0000318"/>
    <property type="project" value="GO_Central"/>
</dbReference>
<dbReference type="GO" id="GO:0005524">
    <property type="term" value="F:ATP binding"/>
    <property type="evidence" value="ECO:0007669"/>
    <property type="project" value="UniProtKB-KW"/>
</dbReference>
<dbReference type="GO" id="GO:0004694">
    <property type="term" value="F:eukaryotic translation initiation factor 2alpha kinase activity"/>
    <property type="evidence" value="ECO:0000314"/>
    <property type="project" value="UniProtKB"/>
</dbReference>
<dbReference type="GO" id="GO:0020037">
    <property type="term" value="F:heme binding"/>
    <property type="evidence" value="ECO:0000250"/>
    <property type="project" value="UniProtKB"/>
</dbReference>
<dbReference type="GO" id="GO:0042803">
    <property type="term" value="F:protein homodimerization activity"/>
    <property type="evidence" value="ECO:0000250"/>
    <property type="project" value="UniProtKB"/>
</dbReference>
<dbReference type="GO" id="GO:0106310">
    <property type="term" value="F:protein serine kinase activity"/>
    <property type="evidence" value="ECO:0007669"/>
    <property type="project" value="RHEA"/>
</dbReference>
<dbReference type="GO" id="GO:0002526">
    <property type="term" value="P:acute inflammatory response"/>
    <property type="evidence" value="ECO:0007669"/>
    <property type="project" value="Ensembl"/>
</dbReference>
<dbReference type="GO" id="GO:0051649">
    <property type="term" value="P:establishment of localization in cell"/>
    <property type="evidence" value="ECO:0007669"/>
    <property type="project" value="Ensembl"/>
</dbReference>
<dbReference type="GO" id="GO:0140468">
    <property type="term" value="P:HRI-mediated signaling"/>
    <property type="evidence" value="ECO:0000314"/>
    <property type="project" value="UniProtKB"/>
</dbReference>
<dbReference type="GO" id="GO:0140467">
    <property type="term" value="P:integrated stress response signaling"/>
    <property type="evidence" value="ECO:0000314"/>
    <property type="project" value="UniProtKB"/>
</dbReference>
<dbReference type="GO" id="GO:0030225">
    <property type="term" value="P:macrophage differentiation"/>
    <property type="evidence" value="ECO:0007669"/>
    <property type="project" value="Ensembl"/>
</dbReference>
<dbReference type="GO" id="GO:0060586">
    <property type="term" value="P:multicellular organismal-level iron ion homeostasis"/>
    <property type="evidence" value="ECO:0007669"/>
    <property type="project" value="Ensembl"/>
</dbReference>
<dbReference type="GO" id="GO:0008285">
    <property type="term" value="P:negative regulation of cell population proliferation"/>
    <property type="evidence" value="ECO:0007669"/>
    <property type="project" value="Ensembl"/>
</dbReference>
<dbReference type="GO" id="GO:0046986">
    <property type="term" value="P:negative regulation of hemoglobin biosynthetic process"/>
    <property type="evidence" value="ECO:0000250"/>
    <property type="project" value="UniProtKB"/>
</dbReference>
<dbReference type="GO" id="GO:0045993">
    <property type="term" value="P:negative regulation of translational initiation by iron"/>
    <property type="evidence" value="ECO:0000303"/>
    <property type="project" value="UniProtKB"/>
</dbReference>
<dbReference type="GO" id="GO:0006909">
    <property type="term" value="P:phagocytosis"/>
    <property type="evidence" value="ECO:0007669"/>
    <property type="project" value="Ensembl"/>
</dbReference>
<dbReference type="GO" id="GO:1901526">
    <property type="term" value="P:positive regulation of mitophagy"/>
    <property type="evidence" value="ECO:0000314"/>
    <property type="project" value="UniProtKB"/>
</dbReference>
<dbReference type="GO" id="GO:0046777">
    <property type="term" value="P:protein autophosphorylation"/>
    <property type="evidence" value="ECO:0000250"/>
    <property type="project" value="UniProtKB"/>
</dbReference>
<dbReference type="GO" id="GO:0070585">
    <property type="term" value="P:protein localization to mitochondrion"/>
    <property type="evidence" value="ECO:0000314"/>
    <property type="project" value="UniProt"/>
</dbReference>
<dbReference type="GO" id="GO:0046501">
    <property type="term" value="P:protoporphyrinogen IX metabolic process"/>
    <property type="evidence" value="ECO:0007669"/>
    <property type="project" value="Ensembl"/>
</dbReference>
<dbReference type="GO" id="GO:0006446">
    <property type="term" value="P:regulation of translational initiation"/>
    <property type="evidence" value="ECO:0000318"/>
    <property type="project" value="GO_Central"/>
</dbReference>
<dbReference type="GO" id="GO:1990641">
    <property type="term" value="P:response to iron ion starvation"/>
    <property type="evidence" value="ECO:0000314"/>
    <property type="project" value="UniProtKB"/>
</dbReference>
<dbReference type="CDD" id="cd14049">
    <property type="entry name" value="STKc_EIF2AK1_HRI"/>
    <property type="match status" value="1"/>
</dbReference>
<dbReference type="FunFam" id="3.30.200.20:FF:000380">
    <property type="entry name" value="Eukaryotic translation initiation factor 2 alpha kinase 1"/>
    <property type="match status" value="1"/>
</dbReference>
<dbReference type="FunFam" id="1.10.510.10:FF:000375">
    <property type="entry name" value="Putative eukaryotic translation initiation factor 2-alpha kinase 1"/>
    <property type="match status" value="1"/>
</dbReference>
<dbReference type="Gene3D" id="3.30.200.20">
    <property type="entry name" value="Phosphorylase Kinase, domain 1"/>
    <property type="match status" value="1"/>
</dbReference>
<dbReference type="Gene3D" id="1.10.510.10">
    <property type="entry name" value="Transferase(Phosphotransferase) domain 1"/>
    <property type="match status" value="1"/>
</dbReference>
<dbReference type="InterPro" id="IPR050339">
    <property type="entry name" value="CC_SR_Kinase"/>
</dbReference>
<dbReference type="InterPro" id="IPR054521">
    <property type="entry name" value="HRI2_3H"/>
</dbReference>
<dbReference type="InterPro" id="IPR011009">
    <property type="entry name" value="Kinase-like_dom_sf"/>
</dbReference>
<dbReference type="InterPro" id="IPR000719">
    <property type="entry name" value="Prot_kinase_dom"/>
</dbReference>
<dbReference type="InterPro" id="IPR017441">
    <property type="entry name" value="Protein_kinase_ATP_BS"/>
</dbReference>
<dbReference type="InterPro" id="IPR008271">
    <property type="entry name" value="Ser/Thr_kinase_AS"/>
</dbReference>
<dbReference type="PANTHER" id="PTHR11042:SF160">
    <property type="entry name" value="EUKARYOTIC TRANSLATION INITIATION FACTOR 2-ALPHA KINASE 1"/>
    <property type="match status" value="1"/>
</dbReference>
<dbReference type="PANTHER" id="PTHR11042">
    <property type="entry name" value="EUKARYOTIC TRANSLATION INITIATION FACTOR 2-ALPHA KINASE EIF2-ALPHA KINASE -RELATED"/>
    <property type="match status" value="1"/>
</dbReference>
<dbReference type="Pfam" id="PF22949">
    <property type="entry name" value="HRI2_3H"/>
    <property type="match status" value="1"/>
</dbReference>
<dbReference type="Pfam" id="PF00069">
    <property type="entry name" value="Pkinase"/>
    <property type="match status" value="2"/>
</dbReference>
<dbReference type="SMART" id="SM00220">
    <property type="entry name" value="S_TKc"/>
    <property type="match status" value="1"/>
</dbReference>
<dbReference type="SUPFAM" id="SSF56112">
    <property type="entry name" value="Protein kinase-like (PK-like)"/>
    <property type="match status" value="1"/>
</dbReference>
<dbReference type="PROSITE" id="PS00107">
    <property type="entry name" value="PROTEIN_KINASE_ATP"/>
    <property type="match status" value="1"/>
</dbReference>
<dbReference type="PROSITE" id="PS50011">
    <property type="entry name" value="PROTEIN_KINASE_DOM"/>
    <property type="match status" value="1"/>
</dbReference>
<dbReference type="PROSITE" id="PS00108">
    <property type="entry name" value="PROTEIN_KINASE_ST"/>
    <property type="match status" value="1"/>
</dbReference>
<name>E2AK1_HUMAN</name>
<feature type="chain" id="PRO_0000085941" description="Eukaryotic translation initiation factor 2-alpha kinase 1">
    <location>
        <begin position="1"/>
        <end position="630"/>
    </location>
</feature>
<feature type="domain" description="Protein kinase" evidence="4">
    <location>
        <begin position="167"/>
        <end position="583"/>
    </location>
</feature>
<feature type="repeat" description="HRM 1">
    <location>
        <begin position="410"/>
        <end position="415"/>
    </location>
</feature>
<feature type="repeat" description="HRM 2">
    <location>
        <begin position="552"/>
        <end position="557"/>
    </location>
</feature>
<feature type="region of interest" description="Disordered" evidence="6">
    <location>
        <begin position="1"/>
        <end position="40"/>
    </location>
</feature>
<feature type="region of interest" description="Disordered" evidence="6">
    <location>
        <begin position="259"/>
        <end position="301"/>
    </location>
</feature>
<feature type="short sequence motif" description="SIFI-degron" evidence="16">
    <location>
        <begin position="85"/>
        <end position="104"/>
    </location>
</feature>
<feature type="compositionally biased region" description="Basic and acidic residues" evidence="6">
    <location>
        <begin position="285"/>
        <end position="294"/>
    </location>
</feature>
<feature type="active site" description="Proton acceptor" evidence="4 5">
    <location>
        <position position="442"/>
    </location>
</feature>
<feature type="binding site" evidence="4">
    <location>
        <begin position="173"/>
        <end position="181"/>
    </location>
    <ligand>
        <name>ATP</name>
        <dbReference type="ChEBI" id="CHEBI:30616"/>
    </ligand>
</feature>
<feature type="binding site" evidence="4">
    <location>
        <position position="196"/>
    </location>
    <ligand>
        <name>ATP</name>
        <dbReference type="ChEBI" id="CHEBI:30616"/>
    </ligand>
</feature>
<feature type="site" description="Heme-binding" evidence="1">
    <location>
        <position position="80"/>
    </location>
</feature>
<feature type="modified residue" description="Phosphothreonine" evidence="2">
    <location>
        <position position="285"/>
    </location>
</feature>
<feature type="modified residue" description="Phosphothreonine; by autocatalysis" evidence="3">
    <location>
        <position position="486"/>
    </location>
</feature>
<feature type="modified residue" description="Phosphothreonine; by autocatalysis" evidence="3">
    <location>
        <position position="488"/>
    </location>
</feature>
<feature type="modified residue" description="Phosphothreonine" evidence="3">
    <location>
        <position position="493"/>
    </location>
</feature>
<feature type="splice variant" id="VSP_007589" description="In isoform 2." evidence="21 22 23">
    <location>
        <position position="244"/>
    </location>
</feature>
<feature type="sequence variant" id="VAR_040466" description="In dbSNP:rs34889754." evidence="9">
    <original>R</original>
    <variation>T</variation>
    <location>
        <position position="117"/>
    </location>
</feature>
<feature type="sequence variant" id="VAR_040467" description="In dbSNP:rs34851195." evidence="9">
    <original>K</original>
    <variation>T</variation>
    <location>
        <position position="132"/>
    </location>
</feature>
<feature type="sequence variant" id="VAR_040468" description="In dbSNP:rs55744865." evidence="9">
    <original>R</original>
    <variation>K</variation>
    <location>
        <position position="134"/>
    </location>
</feature>
<feature type="sequence variant" id="VAR_040469" description="In dbSNP:rs55963745." evidence="9">
    <original>P</original>
    <variation>S</variation>
    <location>
        <position position="139"/>
    </location>
</feature>
<feature type="sequence variant" id="VAR_040470" description="In dbSNP:rs55971369." evidence="9">
    <original>R</original>
    <variation>H</variation>
    <location>
        <position position="145"/>
    </location>
</feature>
<feature type="sequence variant" id="VAR_040471" description="In a lung adenocarcinoma sample; somatic mutation; dbSNP:rs1216460058." evidence="9">
    <original>G</original>
    <variation>S</variation>
    <location>
        <position position="202"/>
    </location>
</feature>
<feature type="sequence variant" id="VAR_040472" description="In dbSNP:rs55982710." evidence="9">
    <original>F</original>
    <variation>L</variation>
    <location>
        <position position="292"/>
    </location>
</feature>
<feature type="sequence variant" id="VAR_040473" description="In dbSNP:rs34909691." evidence="9">
    <original>L</original>
    <variation>H</variation>
    <location>
        <position position="319"/>
    </location>
</feature>
<feature type="sequence variant" id="VAR_084259" description="In LEMSPAD; uncertain significance; mildly reduced phosphorylation of eukaryotic translation initiation factor 2-alpha; dbSNP:rs1583476115." evidence="13">
    <original>I</original>
    <variation>V</variation>
    <location>
        <position position="448"/>
    </location>
</feature>
<feature type="sequence variant" id="VAR_015732" description="In dbSNP:rs2640." evidence="8 9 10 18">
    <original>K</original>
    <variation>R</variation>
    <location>
        <position position="558"/>
    </location>
</feature>
<feature type="sequence conflict" description="In Ref. 3; AAF18391." evidence="26" ref="3">
    <original>Q</original>
    <variation>L</variation>
    <location>
        <position position="2"/>
    </location>
</feature>
<feature type="sequence conflict" description="In Ref. 8; BAF83016." evidence="26" ref="8">
    <original>G</original>
    <variation>D</variation>
    <location>
        <position position="4"/>
    </location>
</feature>
<feature type="sequence conflict" description="In Ref. 1; AAF70289." evidence="26" ref="1">
    <original>PPAIDFPAE</original>
    <variation>RRHRLSRR</variation>
    <location>
        <begin position="24"/>
        <end position="32"/>
    </location>
</feature>
<feature type="sequence conflict" description="In Ref. 1; AAF70289." evidence="26" ref="1">
    <original>Q</original>
    <variation>R</variation>
    <location>
        <position position="137"/>
    </location>
</feature>
<feature type="sequence conflict" description="In Ref. 8; BAF83016." evidence="26" ref="8">
    <original>I</original>
    <variation>T</variation>
    <location>
        <position position="149"/>
    </location>
</feature>
<feature type="sequence conflict" description="In Ref. 3; AAF18391." evidence="26" ref="3">
    <original>A</original>
    <variation>V</variation>
    <location>
        <position position="171"/>
    </location>
</feature>
<feature type="sequence conflict" description="In Ref. 7; AAF66736." evidence="26" ref="7">
    <original>T</original>
    <variation>P</variation>
    <location>
        <position position="206"/>
    </location>
</feature>
<comment type="function">
    <text evidence="3 11 12 13 15 17">Metabolic-stress sensing protein kinase that phosphorylates the alpha subunit of eukaryotic translation initiation factor 2 (EIF2S1/eIF-2-alpha) in response to various stress conditions (PubMed:32132706, PubMed:32132707, PubMed:37327776, PubMed:37550454, PubMed:38340717). Key activator of the integrated stress response (ISR) required for adaptation to various stress, such as heme deficiency, oxidative stress, osmotic shock, mitochondrial dysfunction and heat shock (PubMed:32132706, PubMed:32132707, PubMed:37327776, PubMed:37550454, PubMed:38340717). EIF2S1/eIF-2-alpha phosphorylation in response to stress converts EIF2S1/eIF-2-alpha in a global protein synthesis inhibitor, leading to a global attenuation of cap-dependent translation, while concomitantly initiating the preferential translation of ISR-specific mRNAs, such as the transcriptional activator ATF4, and hence allowing ATF4-mediated reprogramming (PubMed:32132706, PubMed:32132707, PubMed:37327776). Acts as a key sensor of heme-deficiency: in normal conditions, binds hemin via a cysteine thiolate and histidine nitrogenous coordination, leading to inhibit the protein kinase activity (By similarity). This binding occurs with moderate affinity, allowing it to sense the heme concentration within the cell: heme depletion relieves inhibition and stimulates kinase activity, activating the ISR (By similarity). Thanks to this unique heme-sensing capacity, plays a crucial role to shut off protein synthesis during acute heme-deficient conditions (By similarity). In red blood cells (RBCs), controls hemoglobin synthesis ensuring a coordinated regulation of the synthesis of its heme and globin moieties (By similarity). It thereby plays an essential protective role for RBC survival in anemias of iron deficiency (By similarity). Iron deficiency also triggers activation by full-length DELE1 (PubMed:37327776). Also activates the ISR in response to mitochondrial dysfunction: HRI/EIF2AK1 protein kinase activity is activated upon binding to the processed form of DELE1 (S-DELE1), thereby promoting the ATF4-mediated reprogramming (PubMed:32132706, PubMed:32132707). Also acts as an activator of mitophagy in response to mitochondrial damage: catalyzes phosphorylation of eIF-2-alpha (EIF2S1) following activation by S-DELE1, thereby promoting mitochondrial localization of EIF2S1, triggering PRKN-independent mitophagy (PubMed:38340717).</text>
</comment>
<comment type="catalytic activity">
    <reaction evidence="12 17">
        <text>L-seryl-[protein] + ATP = O-phospho-L-seryl-[protein] + ADP + H(+)</text>
        <dbReference type="Rhea" id="RHEA:17989"/>
        <dbReference type="Rhea" id="RHEA-COMP:9863"/>
        <dbReference type="Rhea" id="RHEA-COMP:11604"/>
        <dbReference type="ChEBI" id="CHEBI:15378"/>
        <dbReference type="ChEBI" id="CHEBI:29999"/>
        <dbReference type="ChEBI" id="CHEBI:30616"/>
        <dbReference type="ChEBI" id="CHEBI:83421"/>
        <dbReference type="ChEBI" id="CHEBI:456216"/>
        <dbReference type="EC" id="2.7.11.1"/>
    </reaction>
    <physiologicalReaction direction="left-to-right" evidence="12 17">
        <dbReference type="Rhea" id="RHEA:17990"/>
    </physiologicalReaction>
</comment>
<comment type="catalytic activity">
    <reaction evidence="3">
        <text>L-threonyl-[protein] + ATP = O-phospho-L-threonyl-[protein] + ADP + H(+)</text>
        <dbReference type="Rhea" id="RHEA:46608"/>
        <dbReference type="Rhea" id="RHEA-COMP:11060"/>
        <dbReference type="Rhea" id="RHEA-COMP:11605"/>
        <dbReference type="ChEBI" id="CHEBI:15378"/>
        <dbReference type="ChEBI" id="CHEBI:30013"/>
        <dbReference type="ChEBI" id="CHEBI:30616"/>
        <dbReference type="ChEBI" id="CHEBI:61977"/>
        <dbReference type="ChEBI" id="CHEBI:456216"/>
        <dbReference type="EC" id="2.7.11.1"/>
    </reaction>
    <physiologicalReaction direction="left-to-right" evidence="3">
        <dbReference type="Rhea" id="RHEA:46609"/>
    </physiologicalReaction>
</comment>
<comment type="activity regulation">
    <text evidence="1 3 11 12 14 15 17">In normal conditions, the protein kinase activity is inhibited; inhibition is relieved by various stress conditions (By similarity). Inhibited by heme: in presence of heme, forms a disulfide-linked inactive homodimer (By similarity). Heme depletion relieves inhibition and stimulates kinase activity by autophosphorylation. Inhibited by the heme metabolites biliverdin and bilirubin (By similarity). Induced by oxidative stress generated by arsenite treatment. Binding of nitric oxide (NO) to the heme iron in the N-terminal heme-binding domain activates the kinase activity, while binding of carbon monoxide (CO) suppresses kinase activity (By similarity). Protein kinase activity is also activated upon binding to DELE1 in response to various stress, triggering the integrated stress response (ISR): activated by full-length DELE1 in response to iron deficiency, while it is activated by the processed form of DELE1 (S-DELE1) in response to mitochondrial stress (PubMed:32132706, PubMed:32132707, PubMed:37327776, PubMed:37550454, PubMed:38340717).</text>
</comment>
<comment type="biophysicochemical properties">
    <kinetics>
        <KM evidence="12">3.88 uM for eukaryotic translation initiation factor 2 (EIF2S1/eIF-2-alpha) (in absence of DELE1 and in absence of hemin)</KM>
        <KM evidence="12">1.13 uM for eukaryotic translation initiation factor 2 (EIF2S1/eIF-2-alpha) (in presence of DELE1 and in absence of hemin)</KM>
        <KM evidence="12">71.91 uM for eukaryotic translation initiation factor 2 (EIF2S1/eIF-2-alpha) (in absence of DELE1 and in presence of hemin)</KM>
        <KM evidence="12">6.56 uM for eukaryotic translation initiation factor 2 (EIF2S1/eIF-2-alpha) (in presence of DELE1 and in presence of hemin)</KM>
    </kinetics>
</comment>
<comment type="subunit">
    <text evidence="1 7 11 12 14 15 17">Synthesized in an inactive form that binds to the N-terminal domain of CDC37 (PubMed:11036079). Has to be associated with a multiprotein complex containing Hsp90, CDC37 and PPP5C for maturation and activation by autophosphorylation (PubMed:11036079). The phosphatase PPP5C modulates this activation (PubMed:11036079). Homodimer; homodimerizes in presence of heme, forming a disulfide-linked inactive homodimer (By similarity). Interacts with DELE1; binds both to full-length DELE1 and processed form of DELE1 (S-DELE1) in response to stress, leading to activate its protein kinase activity and trigger the integrated stress response (ISR) (PubMed:32132706, PubMed:32132707, PubMed:37327776, PubMed:37550454, PubMed:38340717).</text>
</comment>
<comment type="interaction">
    <interactant intactId="EBI-640377">
        <id>Q9BQI3</id>
    </interactant>
    <interactant intactId="EBI-352572">
        <id>P08238</id>
        <label>HSP90AB1</label>
    </interactant>
    <organismsDiffer>false</organismsDiffer>
    <experiments>2</experiments>
</comment>
<comment type="interaction">
    <interactant intactId="EBI-640377">
        <id>Q9BQI3</id>
    </interactant>
    <interactant intactId="EBI-351896">
        <id>P11142</id>
        <label>HSPA8</label>
    </interactant>
    <organismsDiffer>false</organismsDiffer>
    <experiments>2</experiments>
</comment>
<comment type="alternative products">
    <event type="alternative splicing"/>
    <isoform>
        <id>Q9BQI3-1</id>
        <name>1</name>
        <sequence type="displayed"/>
    </isoform>
    <isoform>
        <id>Q9BQI3-2</id>
        <name>2</name>
        <sequence type="described" ref="VSP_007589"/>
    </isoform>
</comment>
<comment type="PTM">
    <text evidence="3">Activated by autophosphorylation; phosphorylated predominantly on serine and threonine residues, but also on tyrosine residues. Autophosphorylation at Thr-488 is required for kinase activation. The active autophosphorylated form apparently is largely refractory to cellular heme fluctuations.</text>
</comment>
<comment type="PTM">
    <text evidence="16">Ubiquitinated and degraded by the SIFI complex once the mitochondrial stress has been resolved, thereby providing stress response silencing (PubMed:38297121). Within the SIFI complex, UBR4 initiates ubiquitin chain that are further elongated or branched by KCMF1 (PubMed:38297121).</text>
</comment>
<comment type="disease" evidence="13">
    <disease id="DI-05836">
        <name>Leukoencephalopathy, motor delay, spasticity, and dysarthria syndrome</name>
        <acronym>LEMSPAD</acronym>
        <description>A disorder characterized by delayed motor development, speech delay with dysarthria, hypertonia, progressive spasticity, hyperreflexia, and bradykinesia. Cognition is normal. Patients manifest anxiety and attention deficit-hyperactivity disorder.</description>
        <dbReference type="MIM" id="618878"/>
    </disease>
    <text>The disease may be caused by variants affecting the gene represented in this entry.</text>
</comment>
<comment type="similarity">
    <text evidence="4">Belongs to the protein kinase superfamily. Ser/Thr protein kinase family. GCN2 subfamily.</text>
</comment>
<comment type="caution">
    <text evidence="27 28">Was reported to be expressed predominantly in erythroid cells and at much lower levels in hepatocytes. However, this paper has been retracted because there was improper manipulation, reuse and analyses.</text>
</comment>
<comment type="sequence caution" evidence="26">
    <conflict type="frameshift">
        <sequence resource="EMBL-CDS" id="AAF70289"/>
    </conflict>
</comment>
<comment type="sequence caution" evidence="26">
    <conflict type="erroneous initiation">
        <sequence resource="EMBL-CDS" id="AAF71057"/>
    </conflict>
    <text>Truncated N-terminus.</text>
</comment>
<comment type="sequence caution" evidence="26">
    <conflict type="erroneous initiation">
        <sequence resource="EMBL-CDS" id="BAA92607"/>
    </conflict>
    <text>Extended N-terminus.</text>
</comment>
<reference key="1">
    <citation type="journal article" date="2000" name="Mol. Cells">
        <title>Cloning of hHRI, human heme-regulated eukaryotic initiation factor 2alpha kinase: down-regulated in epithelial ovarian cancers.</title>
        <authorList>
            <person name="Hwang S.-Y."/>
            <person name="Kim M.-K."/>
            <person name="Kim J.-C."/>
        </authorList>
    </citation>
    <scope>NUCLEOTIDE SEQUENCE [MRNA] (ISOFORM 1)</scope>
    <source>
        <tissue>Hair follicle dermal papilla</tissue>
    </source>
</reference>
<reference key="2">
    <citation type="submission" date="1998-10" db="EMBL/GenBank/DDBJ databases">
        <title>Cloning and sequencing of a novel human cDNA homologous to rat hemin-sensitive initiation factor 2a kinase mRNA.</title>
        <authorList>
            <person name="Tu Q."/>
            <person name="Yu L."/>
            <person name="Hu P.R."/>
            <person name="Fu Q."/>
            <person name="Cui Y.Y."/>
            <person name="Zhao S.Y."/>
        </authorList>
    </citation>
    <scope>NUCLEOTIDE SEQUENCE [MRNA] (ISOFORM 1)</scope>
</reference>
<reference key="3">
    <citation type="submission" date="1999-08" db="EMBL/GenBank/DDBJ databases">
        <title>Cloning of the human heme-regulated eukaryotic initiation factor 2-alpha kinase from TNF-alpha stimulated dermal microvascular endothelial cells.</title>
        <authorList>
            <person name="Cannon G."/>
            <person name="Naik S.M."/>
            <person name="Boss J.M."/>
            <person name="Caughman S.W."/>
        </authorList>
    </citation>
    <scope>NUCLEOTIDE SEQUENCE [MRNA] (ISOFORM 1)</scope>
    <source>
        <tissue>Skin</tissue>
    </source>
</reference>
<reference key="4">
    <citation type="journal article" date="2000" name="DNA Res.">
        <title>Prediction of the coding sequences of unidentified human genes. XVI. The complete sequences of 150 new cDNA clones from brain which code for large proteins in vitro.</title>
        <authorList>
            <person name="Nagase T."/>
            <person name="Kikuno R."/>
            <person name="Ishikawa K."/>
            <person name="Hirosawa M."/>
            <person name="Ohara O."/>
        </authorList>
    </citation>
    <scope>NUCLEOTIDE SEQUENCE [LARGE SCALE MRNA] (ISOFORM 1)</scope>
    <source>
        <tissue>Brain</tissue>
    </source>
</reference>
<reference key="5">
    <citation type="journal article" date="2000" name="Proc. Natl. Acad. Sci. U.S.A.">
        <title>Gene expression profiling in the human hypothalamus-pituitary-adrenal axis and full-length cDNA cloning.</title>
        <authorList>
            <person name="Hu R.-M."/>
            <person name="Han Z.-G."/>
            <person name="Song H.-D."/>
            <person name="Peng Y.-D."/>
            <person name="Huang Q.-H."/>
            <person name="Ren S.-X."/>
            <person name="Gu Y.-J."/>
            <person name="Huang C.-H."/>
            <person name="Li Y.-B."/>
            <person name="Jiang C.-L."/>
            <person name="Fu G."/>
            <person name="Zhang Q.-H."/>
            <person name="Gu B.-W."/>
            <person name="Dai M."/>
            <person name="Mao Y.-F."/>
            <person name="Gao G.-F."/>
            <person name="Rong R."/>
            <person name="Ye M."/>
            <person name="Zhou J."/>
            <person name="Xu S.-H."/>
            <person name="Gu J."/>
            <person name="Shi J.-X."/>
            <person name="Jin W.-R."/>
            <person name="Zhang C.-K."/>
            <person name="Wu T.-M."/>
            <person name="Huang G.-Y."/>
            <person name="Chen Z."/>
            <person name="Chen M.-D."/>
            <person name="Chen J.-L."/>
        </authorList>
    </citation>
    <scope>NUCLEOTIDE SEQUENCE [LARGE SCALE MRNA] (ISOFORM 1)</scope>
    <source>
        <tissue>Hypothalamus</tissue>
    </source>
</reference>
<reference key="6">
    <citation type="journal article" date="2001" name="Genome Res.">
        <title>Towards a catalog of human genes and proteins: sequencing and analysis of 500 novel complete protein coding human cDNAs.</title>
        <authorList>
            <person name="Wiemann S."/>
            <person name="Weil B."/>
            <person name="Wellenreuther R."/>
            <person name="Gassenhuber J."/>
            <person name="Glassl S."/>
            <person name="Ansorge W."/>
            <person name="Boecher M."/>
            <person name="Bloecker H."/>
            <person name="Bauersachs S."/>
            <person name="Blum H."/>
            <person name="Lauber J."/>
            <person name="Duesterhoeft A."/>
            <person name="Beyer A."/>
            <person name="Koehrer K."/>
            <person name="Strack N."/>
            <person name="Mewes H.-W."/>
            <person name="Ottenwaelder B."/>
            <person name="Obermaier B."/>
            <person name="Tampe J."/>
            <person name="Heubner D."/>
            <person name="Wambutt R."/>
            <person name="Korn B."/>
            <person name="Klein M."/>
            <person name="Poustka A."/>
        </authorList>
    </citation>
    <scope>NUCLEOTIDE SEQUENCE [LARGE SCALE MRNA] (ISOFORM 2)</scope>
    <source>
        <tissue>Amygdala</tissue>
    </source>
</reference>
<reference key="7">
    <citation type="journal article" date="2002" name="DNA Seq.">
        <title>Molecular cloning and sequencing of the human heme-regulated eukaryotic initiation factor 2 alpha (eIF-2 alpha) kinase from bone marrow culture.</title>
        <authorList>
            <person name="Omasa T."/>
            <person name="Chen Y.-G."/>
            <person name="Mantalaris A."/>
            <person name="Tsai Y.C."/>
            <person name="Wu J.H."/>
        </authorList>
    </citation>
    <scope>NUCLEOTIDE SEQUENCE [MRNA] (ISOFORM 2)</scope>
    <source>
        <tissue>Bone marrow</tissue>
    </source>
</reference>
<reference key="8">
    <citation type="journal article" date="2004" name="Nat. Genet.">
        <title>Complete sequencing and characterization of 21,243 full-length human cDNAs.</title>
        <authorList>
            <person name="Ota T."/>
            <person name="Suzuki Y."/>
            <person name="Nishikawa T."/>
            <person name="Otsuki T."/>
            <person name="Sugiyama T."/>
            <person name="Irie R."/>
            <person name="Wakamatsu A."/>
            <person name="Hayashi K."/>
            <person name="Sato H."/>
            <person name="Nagai K."/>
            <person name="Kimura K."/>
            <person name="Makita H."/>
            <person name="Sekine M."/>
            <person name="Obayashi M."/>
            <person name="Nishi T."/>
            <person name="Shibahara T."/>
            <person name="Tanaka T."/>
            <person name="Ishii S."/>
            <person name="Yamamoto J."/>
            <person name="Saito K."/>
            <person name="Kawai Y."/>
            <person name="Isono Y."/>
            <person name="Nakamura Y."/>
            <person name="Nagahari K."/>
            <person name="Murakami K."/>
            <person name="Yasuda T."/>
            <person name="Iwayanagi T."/>
            <person name="Wagatsuma M."/>
            <person name="Shiratori A."/>
            <person name="Sudo H."/>
            <person name="Hosoiri T."/>
            <person name="Kaku Y."/>
            <person name="Kodaira H."/>
            <person name="Kondo H."/>
            <person name="Sugawara M."/>
            <person name="Takahashi M."/>
            <person name="Kanda K."/>
            <person name="Yokoi T."/>
            <person name="Furuya T."/>
            <person name="Kikkawa E."/>
            <person name="Omura Y."/>
            <person name="Abe K."/>
            <person name="Kamihara K."/>
            <person name="Katsuta N."/>
            <person name="Sato K."/>
            <person name="Tanikawa M."/>
            <person name="Yamazaki M."/>
            <person name="Ninomiya K."/>
            <person name="Ishibashi T."/>
            <person name="Yamashita H."/>
            <person name="Murakawa K."/>
            <person name="Fujimori K."/>
            <person name="Tanai H."/>
            <person name="Kimata M."/>
            <person name="Watanabe M."/>
            <person name="Hiraoka S."/>
            <person name="Chiba Y."/>
            <person name="Ishida S."/>
            <person name="Ono Y."/>
            <person name="Takiguchi S."/>
            <person name="Watanabe S."/>
            <person name="Yosida M."/>
            <person name="Hotuta T."/>
            <person name="Kusano J."/>
            <person name="Kanehori K."/>
            <person name="Takahashi-Fujii A."/>
            <person name="Hara H."/>
            <person name="Tanase T.-O."/>
            <person name="Nomura Y."/>
            <person name="Togiya S."/>
            <person name="Komai F."/>
            <person name="Hara R."/>
            <person name="Takeuchi K."/>
            <person name="Arita M."/>
            <person name="Imose N."/>
            <person name="Musashino K."/>
            <person name="Yuuki H."/>
            <person name="Oshima A."/>
            <person name="Sasaki N."/>
            <person name="Aotsuka S."/>
            <person name="Yoshikawa Y."/>
            <person name="Matsunawa H."/>
            <person name="Ichihara T."/>
            <person name="Shiohata N."/>
            <person name="Sano S."/>
            <person name="Moriya S."/>
            <person name="Momiyama H."/>
            <person name="Satoh N."/>
            <person name="Takami S."/>
            <person name="Terashima Y."/>
            <person name="Suzuki O."/>
            <person name="Nakagawa S."/>
            <person name="Senoh A."/>
            <person name="Mizoguchi H."/>
            <person name="Goto Y."/>
            <person name="Shimizu F."/>
            <person name="Wakebe H."/>
            <person name="Hishigaki H."/>
            <person name="Watanabe T."/>
            <person name="Sugiyama A."/>
            <person name="Takemoto M."/>
            <person name="Kawakami B."/>
            <person name="Yamazaki M."/>
            <person name="Watanabe K."/>
            <person name="Kumagai A."/>
            <person name="Itakura S."/>
            <person name="Fukuzumi Y."/>
            <person name="Fujimori Y."/>
            <person name="Komiyama M."/>
            <person name="Tashiro H."/>
            <person name="Tanigami A."/>
            <person name="Fujiwara T."/>
            <person name="Ono T."/>
            <person name="Yamada K."/>
            <person name="Fujii Y."/>
            <person name="Ozaki K."/>
            <person name="Hirao M."/>
            <person name="Ohmori Y."/>
            <person name="Kawabata A."/>
            <person name="Hikiji T."/>
            <person name="Kobatake N."/>
            <person name="Inagaki H."/>
            <person name="Ikema Y."/>
            <person name="Okamoto S."/>
            <person name="Okitani R."/>
            <person name="Kawakami T."/>
            <person name="Noguchi S."/>
            <person name="Itoh T."/>
            <person name="Shigeta K."/>
            <person name="Senba T."/>
            <person name="Matsumura K."/>
            <person name="Nakajima Y."/>
            <person name="Mizuno T."/>
            <person name="Morinaga M."/>
            <person name="Sasaki M."/>
            <person name="Togashi T."/>
            <person name="Oyama M."/>
            <person name="Hata H."/>
            <person name="Watanabe M."/>
            <person name="Komatsu T."/>
            <person name="Mizushima-Sugano J."/>
            <person name="Satoh T."/>
            <person name="Shirai Y."/>
            <person name="Takahashi Y."/>
            <person name="Nakagawa K."/>
            <person name="Okumura K."/>
            <person name="Nagase T."/>
            <person name="Nomura N."/>
            <person name="Kikuchi H."/>
            <person name="Masuho Y."/>
            <person name="Yamashita R."/>
            <person name="Nakai K."/>
            <person name="Yada T."/>
            <person name="Nakamura Y."/>
            <person name="Ohara O."/>
            <person name="Isogai T."/>
            <person name="Sugano S."/>
        </authorList>
    </citation>
    <scope>NUCLEOTIDE SEQUENCE [LARGE SCALE MRNA] (ISOFORM 1)</scope>
    <scope>VARIANT ARG-558</scope>
    <source>
        <tissue>Placenta</tissue>
        <tissue>Tongue</tissue>
    </source>
</reference>
<reference key="9">
    <citation type="journal article" date="2007" name="BMC Genomics">
        <title>The full-ORF clone resource of the German cDNA consortium.</title>
        <authorList>
            <person name="Bechtel S."/>
            <person name="Rosenfelder H."/>
            <person name="Duda A."/>
            <person name="Schmidt C.P."/>
            <person name="Ernst U."/>
            <person name="Wellenreuther R."/>
            <person name="Mehrle A."/>
            <person name="Schuster C."/>
            <person name="Bahr A."/>
            <person name="Bloecker H."/>
            <person name="Heubner D."/>
            <person name="Hoerlein A."/>
            <person name="Michel G."/>
            <person name="Wedler H."/>
            <person name="Koehrer K."/>
            <person name="Ottenwaelder B."/>
            <person name="Poustka A."/>
            <person name="Wiemann S."/>
            <person name="Schupp I."/>
        </authorList>
    </citation>
    <scope>NUCLEOTIDE SEQUENCE [LARGE SCALE MRNA] (ISOFORM 2)</scope>
    <source>
        <tissue>Amygdala</tissue>
    </source>
</reference>
<reference key="10">
    <citation type="journal article" date="2003" name="Science">
        <title>Human chromosome 7: DNA sequence and biology.</title>
        <authorList>
            <person name="Scherer S.W."/>
            <person name="Cheung J."/>
            <person name="MacDonald J.R."/>
            <person name="Osborne L.R."/>
            <person name="Nakabayashi K."/>
            <person name="Herbrick J.-A."/>
            <person name="Carson A.R."/>
            <person name="Parker-Katiraee L."/>
            <person name="Skaug J."/>
            <person name="Khaja R."/>
            <person name="Zhang J."/>
            <person name="Hudek A.K."/>
            <person name="Li M."/>
            <person name="Haddad M."/>
            <person name="Duggan G.E."/>
            <person name="Fernandez B.A."/>
            <person name="Kanematsu E."/>
            <person name="Gentles S."/>
            <person name="Christopoulos C.C."/>
            <person name="Choufani S."/>
            <person name="Kwasnicka D."/>
            <person name="Zheng X.H."/>
            <person name="Lai Z."/>
            <person name="Nusskern D.R."/>
            <person name="Zhang Q."/>
            <person name="Gu Z."/>
            <person name="Lu F."/>
            <person name="Zeesman S."/>
            <person name="Nowaczyk M.J."/>
            <person name="Teshima I."/>
            <person name="Chitayat D."/>
            <person name="Shuman C."/>
            <person name="Weksberg R."/>
            <person name="Zackai E.H."/>
            <person name="Grebe T.A."/>
            <person name="Cox S.R."/>
            <person name="Kirkpatrick S.J."/>
            <person name="Rahman N."/>
            <person name="Friedman J.M."/>
            <person name="Heng H.H.Q."/>
            <person name="Pelicci P.G."/>
            <person name="Lo-Coco F."/>
            <person name="Belloni E."/>
            <person name="Shaffer L.G."/>
            <person name="Pober B."/>
            <person name="Morton C.C."/>
            <person name="Gusella J.F."/>
            <person name="Bruns G.A.P."/>
            <person name="Korf B.R."/>
            <person name="Quade B.J."/>
            <person name="Ligon A.H."/>
            <person name="Ferguson H."/>
            <person name="Higgins A.W."/>
            <person name="Leach N.T."/>
            <person name="Herrick S.R."/>
            <person name="Lemyre E."/>
            <person name="Farra C.G."/>
            <person name="Kim H.-G."/>
            <person name="Summers A.M."/>
            <person name="Gripp K.W."/>
            <person name="Roberts W."/>
            <person name="Szatmari P."/>
            <person name="Winsor E.J.T."/>
            <person name="Grzeschik K.-H."/>
            <person name="Teebi A."/>
            <person name="Minassian B.A."/>
            <person name="Kere J."/>
            <person name="Armengol L."/>
            <person name="Pujana M.A."/>
            <person name="Estivill X."/>
            <person name="Wilson M.D."/>
            <person name="Koop B.F."/>
            <person name="Tosi S."/>
            <person name="Moore G.E."/>
            <person name="Boright A.P."/>
            <person name="Zlotorynski E."/>
            <person name="Kerem B."/>
            <person name="Kroisel P.M."/>
            <person name="Petek E."/>
            <person name="Oscier D.G."/>
            <person name="Mould S.J."/>
            <person name="Doehner H."/>
            <person name="Doehner K."/>
            <person name="Rommens J.M."/>
            <person name="Vincent J.B."/>
            <person name="Venter J.C."/>
            <person name="Li P.W."/>
            <person name="Mural R.J."/>
            <person name="Adams M.D."/>
            <person name="Tsui L.-C."/>
        </authorList>
    </citation>
    <scope>NUCLEOTIDE SEQUENCE [LARGE SCALE GENOMIC DNA]</scope>
</reference>
<reference key="11">
    <citation type="submission" date="2005-07" db="EMBL/GenBank/DDBJ databases">
        <authorList>
            <person name="Mural R.J."/>
            <person name="Istrail S."/>
            <person name="Sutton G.G."/>
            <person name="Florea L."/>
            <person name="Halpern A.L."/>
            <person name="Mobarry C.M."/>
            <person name="Lippert R."/>
            <person name="Walenz B."/>
            <person name="Shatkay H."/>
            <person name="Dew I."/>
            <person name="Miller J.R."/>
            <person name="Flanigan M.J."/>
            <person name="Edwards N.J."/>
            <person name="Bolanos R."/>
            <person name="Fasulo D."/>
            <person name="Halldorsson B.V."/>
            <person name="Hannenhalli S."/>
            <person name="Turner R."/>
            <person name="Yooseph S."/>
            <person name="Lu F."/>
            <person name="Nusskern D.R."/>
            <person name="Shue B.C."/>
            <person name="Zheng X.H."/>
            <person name="Zhong F."/>
            <person name="Delcher A.L."/>
            <person name="Huson D.H."/>
            <person name="Kravitz S.A."/>
            <person name="Mouchard L."/>
            <person name="Reinert K."/>
            <person name="Remington K.A."/>
            <person name="Clark A.G."/>
            <person name="Waterman M.S."/>
            <person name="Eichler E.E."/>
            <person name="Adams M.D."/>
            <person name="Hunkapiller M.W."/>
            <person name="Myers E.W."/>
            <person name="Venter J.C."/>
        </authorList>
    </citation>
    <scope>NUCLEOTIDE SEQUENCE [LARGE SCALE GENOMIC DNA]</scope>
</reference>
<reference key="12">
    <citation type="journal article" date="2004" name="Genome Res.">
        <title>The status, quality, and expansion of the NIH full-length cDNA project: the Mammalian Gene Collection (MGC).</title>
        <authorList>
            <consortium name="The MGC Project Team"/>
        </authorList>
    </citation>
    <scope>NUCLEOTIDE SEQUENCE [LARGE SCALE MRNA] (ISOFORM 1)</scope>
    <source>
        <tissue>Ovary</tissue>
    </source>
</reference>
<reference key="13">
    <citation type="submission" date="1998-12" db="EMBL/GenBank/DDBJ databases">
        <title>Functional prediction of the coding sequences of 121 new genes deduced by analysis of cDNA clones from human fetal liver.</title>
        <authorList>
            <person name="Zhang C."/>
            <person name="Yu Y."/>
            <person name="Zhang S."/>
            <person name="Wei H."/>
            <person name="Zhou G."/>
            <person name="Ouyang S."/>
            <person name="Luo L."/>
            <person name="Bi J."/>
            <person name="Liu M."/>
            <person name="He F."/>
        </authorList>
    </citation>
    <scope>NUCLEOTIDE SEQUENCE [LARGE SCALE MRNA] OF 450-630</scope>
    <scope>VARIANT ARG-558</scope>
    <source>
        <tissue>Fetal liver</tissue>
    </source>
</reference>
<reference key="14">
    <citation type="journal article" date="2001" name="J. Biol. Chem.">
        <title>Hsp90 regulates p50(cdc37) function during the biogenesis of the active conformation of the heme-regulated eIF2 alpha kinase.</title>
        <authorList>
            <person name="Shao J."/>
            <person name="Grammatikakis N."/>
            <person name="Scroggins B.T."/>
            <person name="Uma S."/>
            <person name="Huang W."/>
            <person name="Chen J.-J."/>
            <person name="Hartson S.D."/>
            <person name="Matts R.L."/>
        </authorList>
    </citation>
    <scope>INTERACTION WITH CDC37 AND THE HSP90 COMPLEX</scope>
</reference>
<reference key="15">
    <citation type="journal article" date="2008" name="Mol. Cell">
        <title>Kinase-selective enrichment enables quantitative phosphoproteomics of the kinome across the cell cycle.</title>
        <authorList>
            <person name="Daub H."/>
            <person name="Olsen J.V."/>
            <person name="Bairlein M."/>
            <person name="Gnad F."/>
            <person name="Oppermann F.S."/>
            <person name="Korner R."/>
            <person name="Greff Z."/>
            <person name="Keri G."/>
            <person name="Stemmann O."/>
            <person name="Mann M."/>
        </authorList>
    </citation>
    <scope>IDENTIFICATION BY MASS SPECTROMETRY [LARGE SCALE ANALYSIS]</scope>
    <source>
        <tissue>Cervix carcinoma</tissue>
    </source>
</reference>
<reference key="16">
    <citation type="journal article" date="2010" name="Mol. Pharmacol.">
        <title>Hepatic heme-regulated inhibitor (HRI) eukaryotic initiation factor 2alpha kinase: a protagonist of heme-mediated translational control of CYP2B enzymes and a modulator of basal endoplasmic reticulum stress tone.</title>
        <authorList>
            <person name="Acharya P."/>
            <person name="Chen J.J."/>
            <person name="Correia M.A."/>
        </authorList>
    </citation>
    <scope>RETRACTED PAPER</scope>
</reference>
<reference key="17">
    <citation type="journal article" date="2021" name="Mol. Pharmacol.">
        <title>Notice of Retraction: Acharya P, Chen J-J, Correia MA (2010) Hepatic heme-regulated inhibitor (HRI) eukaryotic initiation factor 2alpha kinase: a protagonist of heme-mediated translational control of CYP2B enzymes and a modulator of basal endoplasmic reticulum stress tone. Mol Pharmacol 77(4):575-592; doi:10.1124/mol.109.061259.</title>
        <authorList>
            <person name="Acharya P."/>
            <person name="Chen J.J."/>
            <person name="Correia M.A."/>
        </authorList>
    </citation>
    <scope>RETRACTION NOTICE OF PUBMED:20071449</scope>
</reference>
<reference key="18">
    <citation type="journal article" date="2011" name="BMC Syst. Biol.">
        <title>Initial characterization of the human central proteome.</title>
        <authorList>
            <person name="Burkard T.R."/>
            <person name="Planyavsky M."/>
            <person name="Kaupe I."/>
            <person name="Breitwieser F.P."/>
            <person name="Buerckstuemmer T."/>
            <person name="Bennett K.L."/>
            <person name="Superti-Furga G."/>
            <person name="Colinge J."/>
        </authorList>
    </citation>
    <scope>IDENTIFICATION BY MASS SPECTROMETRY [LARGE SCALE ANALYSIS]</scope>
</reference>
<reference key="19">
    <citation type="journal article" date="2020" name="Am. J. Hum. Genet.">
        <title>De novo EIF2AK1 and EIF2AK2 variants are associated with developmental delay, leukoencephalopathy, and neurologic decompensation.</title>
        <authorList>
            <consortium name="Undiagnosed Diseases Network"/>
            <person name="Mao D."/>
            <person name="Reuter C.M."/>
            <person name="Ruzhnikov M.R.Z."/>
            <person name="Beck A.E."/>
            <person name="Farrow E.G."/>
            <person name="Emrick L.T."/>
            <person name="Rosenfeld J.A."/>
            <person name="Mackenzie K.M."/>
            <person name="Robak L."/>
            <person name="Wheeler M.T."/>
            <person name="Burrage L.C."/>
            <person name="Jain M."/>
            <person name="Liu P."/>
            <person name="Calame D."/>
            <person name="Kuery S."/>
            <person name="Sillesen M."/>
            <person name="Schmitz-Abe K."/>
            <person name="Tonduti D."/>
            <person name="Spaccini L."/>
            <person name="Iascone M."/>
            <person name="Genetti C.A."/>
            <person name="Koenig M.K."/>
            <person name="Graf M."/>
            <person name="Tran A."/>
            <person name="Alejandro M."/>
            <person name="Lee B.H."/>
            <person name="Thiffault I."/>
            <person name="Agrawal P.B."/>
            <person name="Bernstein J.A."/>
            <person name="Bellen H.J."/>
            <person name="Chao H.T."/>
        </authorList>
    </citation>
    <scope>INVOLVEMENT IN LEMSPAD</scope>
    <scope>FUNCTION</scope>
    <scope>VARIANT LEMSPAD VAL-448</scope>
    <scope>CHARACTERIZATION OF VARIANT LEMSPAD VAL-448</scope>
</reference>
<reference key="20">
    <citation type="journal article" date="2020" name="Nature">
        <title>A pathway coordinated by DELE1 relays mitochondrial stress to the cytosol.</title>
        <authorList>
            <person name="Fessler E."/>
            <person name="Eckl E.M."/>
            <person name="Schmitt S."/>
            <person name="Mancilla I.A."/>
            <person name="Meyer-Bender M.F."/>
            <person name="Hanf M."/>
            <person name="Philippou-Massier J."/>
            <person name="Krebs S."/>
            <person name="Zischka H."/>
            <person name="Jae L.T."/>
        </authorList>
    </citation>
    <scope>FUNCTION</scope>
    <scope>ACTIVITY REGULATION</scope>
    <scope>INTERACTION WITH DELE1</scope>
</reference>
<reference key="21">
    <citation type="journal article" date="2020" name="Nature">
        <title>Mitochondrial stress is relayed to the cytosol by an OMA1-DELE1-HRI pathway.</title>
        <authorList>
            <person name="Guo X."/>
            <person name="Aviles G."/>
            <person name="Liu Y."/>
            <person name="Tian R."/>
            <person name="Unger B.A."/>
            <person name="Lin Y.T."/>
            <person name="Wiita A.P."/>
            <person name="Xu K."/>
            <person name="Correia M.A."/>
            <person name="Kampmann M."/>
        </authorList>
    </citation>
    <scope>FUNCTION</scope>
    <scope>CATALYTIC ACTIVITY</scope>
    <scope>ACTIVITY REGULATION</scope>
    <scope>INTERACTION WITH DELE1</scope>
</reference>
<reference key="22">
    <citation type="journal article" date="2023" name="Mol. Cell">
        <title>A mitochondrial iron-responsive pathway regulated by DELE1.</title>
        <authorList>
            <person name="Sekine Y."/>
            <person name="Houston R."/>
            <person name="Eckl E.M."/>
            <person name="Fessler E."/>
            <person name="Narendra D.P."/>
            <person name="Jae L.T."/>
            <person name="Sekine S."/>
        </authorList>
    </citation>
    <scope>FUNCTION</scope>
    <scope>ACTIVITY REGULATION</scope>
    <scope>INTERACTION WITH DELE1</scope>
</reference>
<reference key="23">
    <citation type="journal article" date="2023" name="Nat. Struct. Mol. Biol.">
        <title>DELE1 oligomerization promotes integrated stress response activation.</title>
        <authorList>
            <person name="Yang J."/>
            <person name="Baron K.R."/>
            <person name="Pride D.E."/>
            <person name="Schneemann A."/>
            <person name="Guo X."/>
            <person name="Chen W."/>
            <person name="Song A.S."/>
            <person name="Aviles G."/>
            <person name="Kampmann M."/>
            <person name="Wiseman R.L."/>
            <person name="Lander G.C."/>
        </authorList>
    </citation>
    <scope>FUNCTION</scope>
    <scope>ACTIVITY REGULATION</scope>
    <scope>INTERACTION WITH DELE1</scope>
</reference>
<reference key="24">
    <citation type="journal article" date="2024" name="Mol. Cell">
        <title>The HRI branch of the integrated stress response selectively triggers mitophagy.</title>
        <authorList>
            <person name="Chakrabarty Y."/>
            <person name="Yang Z."/>
            <person name="Chen H."/>
            <person name="Chan D.C."/>
        </authorList>
    </citation>
    <scope>FUNCTION</scope>
    <scope>CATALYTIC ACTIVITY</scope>
    <scope>ACTIVITY REGULATION</scope>
    <scope>INTERACTION WITH DELE1</scope>
</reference>
<reference key="25">
    <citation type="journal article" date="2024" name="Nature">
        <title>Stress response silencing by an E3 ligase mutated in neurodegeneration.</title>
        <authorList>
            <person name="Haakonsen D.L."/>
            <person name="Heider M."/>
            <person name="Ingersoll A.J."/>
            <person name="Vodehnal K."/>
            <person name="Witus S.R."/>
            <person name="Uenaka T."/>
            <person name="Wernig M."/>
            <person name="Rape M."/>
        </authorList>
    </citation>
    <scope>UBIQUITINATION</scope>
</reference>
<reference key="26">
    <citation type="journal article" date="2007" name="Nature">
        <title>Patterns of somatic mutation in human cancer genomes.</title>
        <authorList>
            <person name="Greenman C."/>
            <person name="Stephens P."/>
            <person name="Smith R."/>
            <person name="Dalgliesh G.L."/>
            <person name="Hunter C."/>
            <person name="Bignell G."/>
            <person name="Davies H."/>
            <person name="Teague J."/>
            <person name="Butler A."/>
            <person name="Stevens C."/>
            <person name="Edkins S."/>
            <person name="O'Meara S."/>
            <person name="Vastrik I."/>
            <person name="Schmidt E.E."/>
            <person name="Avis T."/>
            <person name="Barthorpe S."/>
            <person name="Bhamra G."/>
            <person name="Buck G."/>
            <person name="Choudhury B."/>
            <person name="Clements J."/>
            <person name="Cole J."/>
            <person name="Dicks E."/>
            <person name="Forbes S."/>
            <person name="Gray K."/>
            <person name="Halliday K."/>
            <person name="Harrison R."/>
            <person name="Hills K."/>
            <person name="Hinton J."/>
            <person name="Jenkinson A."/>
            <person name="Jones D."/>
            <person name="Menzies A."/>
            <person name="Mironenko T."/>
            <person name="Perry J."/>
            <person name="Raine K."/>
            <person name="Richardson D."/>
            <person name="Shepherd R."/>
            <person name="Small A."/>
            <person name="Tofts C."/>
            <person name="Varian J."/>
            <person name="Webb T."/>
            <person name="West S."/>
            <person name="Widaa S."/>
            <person name="Yates A."/>
            <person name="Cahill D.P."/>
            <person name="Louis D.N."/>
            <person name="Goldstraw P."/>
            <person name="Nicholson A.G."/>
            <person name="Brasseur F."/>
            <person name="Looijenga L."/>
            <person name="Weber B.L."/>
            <person name="Chiew Y.-E."/>
            <person name="DeFazio A."/>
            <person name="Greaves M.F."/>
            <person name="Green A.R."/>
            <person name="Campbell P."/>
            <person name="Birney E."/>
            <person name="Easton D.F."/>
            <person name="Chenevix-Trench G."/>
            <person name="Tan M.-H."/>
            <person name="Khoo S.K."/>
            <person name="Teh B.T."/>
            <person name="Yuen S.T."/>
            <person name="Leung S.Y."/>
            <person name="Wooster R."/>
            <person name="Futreal P.A."/>
            <person name="Stratton M.R."/>
        </authorList>
    </citation>
    <scope>VARIANTS [LARGE SCALE ANALYSIS] THR-117; THR-132; LYS-134; SER-139; HIS-145; SER-202; LEU-292; HIS-319 AND ARG-558</scope>
</reference>
<reference key="27">
    <citation type="journal article" date="2017" name="Clin. Immunol.">
        <title>Genetic modifiers of multiple sclerosis progression, severity and onset.</title>
        <authorList>
            <person name="Sadovnick A.D."/>
            <person name="Traboulsee A.L."/>
            <person name="Zhao Y."/>
            <person name="Bernales C.Q."/>
            <person name="Encarnacion M."/>
            <person name="Ross J.P."/>
            <person name="Yee I.M."/>
            <person name="Criscuoli M.G."/>
            <person name="Vilarino-Gueell C."/>
        </authorList>
    </citation>
    <scope>VARIANT ARG-558</scope>
</reference>
<proteinExistence type="evidence at protein level"/>
<evidence type="ECO:0000250" key="1">
    <source>
        <dbReference type="UniProtKB" id="P33279"/>
    </source>
</evidence>
<evidence type="ECO:0000250" key="2">
    <source>
        <dbReference type="UniProtKB" id="Q63185"/>
    </source>
</evidence>
<evidence type="ECO:0000250" key="3">
    <source>
        <dbReference type="UniProtKB" id="Q9Z2R9"/>
    </source>
</evidence>
<evidence type="ECO:0000255" key="4">
    <source>
        <dbReference type="PROSITE-ProRule" id="PRU00159"/>
    </source>
</evidence>
<evidence type="ECO:0000255" key="5">
    <source>
        <dbReference type="PROSITE-ProRule" id="PRU10027"/>
    </source>
</evidence>
<evidence type="ECO:0000256" key="6">
    <source>
        <dbReference type="SAM" id="MobiDB-lite"/>
    </source>
</evidence>
<evidence type="ECO:0000269" key="7">
    <source>
    </source>
</evidence>
<evidence type="ECO:0000269" key="8">
    <source>
    </source>
</evidence>
<evidence type="ECO:0000269" key="9">
    <source>
    </source>
</evidence>
<evidence type="ECO:0000269" key="10">
    <source>
    </source>
</evidence>
<evidence type="ECO:0000269" key="11">
    <source>
    </source>
</evidence>
<evidence type="ECO:0000269" key="12">
    <source>
    </source>
</evidence>
<evidence type="ECO:0000269" key="13">
    <source>
    </source>
</evidence>
<evidence type="ECO:0000269" key="14">
    <source>
    </source>
</evidence>
<evidence type="ECO:0000269" key="15">
    <source>
    </source>
</evidence>
<evidence type="ECO:0000269" key="16">
    <source>
    </source>
</evidence>
<evidence type="ECO:0000269" key="17">
    <source>
    </source>
</evidence>
<evidence type="ECO:0000269" key="18">
    <source ref="13"/>
</evidence>
<evidence type="ECO:0000303" key="19">
    <source>
    </source>
</evidence>
<evidence type="ECO:0000303" key="20">
    <source>
    </source>
</evidence>
<evidence type="ECO:0000303" key="21">
    <source>
    </source>
</evidence>
<evidence type="ECO:0000303" key="22">
    <source>
    </source>
</evidence>
<evidence type="ECO:0000303" key="23">
    <source>
    </source>
</evidence>
<evidence type="ECO:0000303" key="24">
    <source ref="2"/>
</evidence>
<evidence type="ECO:0000303" key="25">
    <source ref="3"/>
</evidence>
<evidence type="ECO:0000305" key="26"/>
<evidence type="ECO:0000305" key="27">
    <source>
    </source>
</evidence>
<evidence type="ECO:0000305" key="28">
    <source>
    </source>
</evidence>
<evidence type="ECO:0000312" key="29">
    <source>
        <dbReference type="HGNC" id="HGNC:24921"/>
    </source>
</evidence>
<protein>
    <recommendedName>
        <fullName evidence="26">Eukaryotic translation initiation factor 2-alpha kinase 1</fullName>
        <ecNumber evidence="12 17">2.7.11.1</ecNumber>
    </recommendedName>
    <alternativeName>
        <fullName>Heme-controlled repressor</fullName>
        <shortName>HCR</shortName>
    </alternativeName>
    <alternativeName>
        <fullName evidence="25">Heme-regulated eukaryotic initiation factor eIF-2-alpha kinase</fullName>
    </alternativeName>
    <alternativeName>
        <fullName evidence="20">Heme-regulated inhibitor</fullName>
        <shortName evidence="20">hHRI</shortName>
    </alternativeName>
    <alternativeName>
        <fullName evidence="24">Hemin-sensitive initiation factor 2-alpha kinase</fullName>
    </alternativeName>
</protein>
<gene>
    <name evidence="29" type="primary">EIF2AK1</name>
    <name evidence="20" type="synonym">HRI</name>
    <name evidence="19" type="synonym">KIAA1369</name>
    <name type="ORF">PRO1362</name>
</gene>
<sequence>MQGGNSGVRKREEEGDGAGAVAAPPAIDFPAEGPDPEYDESDVPAEIQVLKEPLQQPTFPFAVANQLLLVSLLEHLSHVHEPNPLRSRQVFKLLCQTFIKMGLLSSFTCSDEFSSLRLHHNRAITHLMRSAKERVRQDPCEDISRIQKIRSREVALEAQTSRYLNEFEELAILGKGGYGRVYKVRNKLDGQYYAIKKILIKGATKTVCMKVLREVKVLAGLQHPNIVGYHTAWIEHVHVIQPRADRAAIELPSLEVLSDQEEDREQCGVKNDESSSSSIIFAEPTPEKEKRFGESDTENQNNKSVKYTTNLVIRESGELESTLELQENGLAGLSASSIVEQQLPLRRNSHLEESFTSTEESSEENVNFLGQTEAQYHLMLHIQMQLCELSLWDWIVERNKRGREYVDESACPYVMANVATKIFQELVEGVFYIHNMGIVHRDLKPRNIFLHGPDQQVKIGDFGLACTDILQKNTDWTNRNGKRTPTHTSRVGTCLYASPEQLEGSEYDAKSDMYSLGVVLLELFQPFGTEMERAEVLTGLRTGQLPESLRKRCPVQAKYIQHLTRRNSSQRPSAIQLLQSELFQNSGNVNLTLQMKIIEQEKEIAELKKQLNLLSQDKGVRDDGKDGGVG</sequence>
<keyword id="KW-0025">Alternative splicing</keyword>
<keyword id="KW-0067">ATP-binding</keyword>
<keyword id="KW-1015">Disulfide bond</keyword>
<keyword id="KW-0418">Kinase</keyword>
<keyword id="KW-0547">Nucleotide-binding</keyword>
<keyword id="KW-0597">Phosphoprotein</keyword>
<keyword id="KW-0652">Protein synthesis inhibitor</keyword>
<keyword id="KW-1267">Proteomics identification</keyword>
<keyword id="KW-1185">Reference proteome</keyword>
<keyword id="KW-0677">Repeat</keyword>
<keyword id="KW-0723">Serine/threonine-protein kinase</keyword>
<keyword id="KW-0808">Transferase</keyword>
<keyword id="KW-0832">Ubl conjugation</keyword>
<organism>
    <name type="scientific">Homo sapiens</name>
    <name type="common">Human</name>
    <dbReference type="NCBI Taxonomy" id="9606"/>
    <lineage>
        <taxon>Eukaryota</taxon>
        <taxon>Metazoa</taxon>
        <taxon>Chordata</taxon>
        <taxon>Craniata</taxon>
        <taxon>Vertebrata</taxon>
        <taxon>Euteleostomi</taxon>
        <taxon>Mammalia</taxon>
        <taxon>Eutheria</taxon>
        <taxon>Euarchontoglires</taxon>
        <taxon>Primates</taxon>
        <taxon>Haplorrhini</taxon>
        <taxon>Catarrhini</taxon>
        <taxon>Hominidae</taxon>
        <taxon>Homo</taxon>
    </lineage>
</organism>
<accession>Q9BQI3</accession>
<accession>A8K2R2</accession>
<accession>Q549K6</accession>
<accession>Q8NBW3</accession>
<accession>Q9HC02</accession>
<accession>Q9NYE0</accession>
<accession>Q9P0V6</accession>
<accession>Q9P1J5</accession>
<accession>Q9P2H8</accession>
<accession>Q9UHG4</accession>